<accession>P53159</accession>
<accession>D6VU69</accession>
<organism>
    <name type="scientific">Saccharomyces cerevisiae (strain ATCC 204508 / S288c)</name>
    <name type="common">Baker's yeast</name>
    <dbReference type="NCBI Taxonomy" id="559292"/>
    <lineage>
        <taxon>Eukaryota</taxon>
        <taxon>Fungi</taxon>
        <taxon>Dikarya</taxon>
        <taxon>Ascomycota</taxon>
        <taxon>Saccharomycotina</taxon>
        <taxon>Saccharomycetes</taxon>
        <taxon>Saccharomycetales</taxon>
        <taxon>Saccharomycetaceae</taxon>
        <taxon>Saccharomyces</taxon>
    </lineage>
</organism>
<keyword id="KW-0175">Coiled coil</keyword>
<keyword id="KW-0963">Cytoplasm</keyword>
<keyword id="KW-0206">Cytoskeleton</keyword>
<keyword id="KW-0472">Membrane</keyword>
<keyword id="KW-0539">Nucleus</keyword>
<keyword id="KW-1185">Reference proteome</keyword>
<keyword id="KW-0812">Transmembrane</keyword>
<keyword id="KW-1133">Transmembrane helix</keyword>
<sequence>MSNGAFDAIFEYAWGQIDKPISGDFIYGKDLPKLIEIIENIFQKAQKSGSYELRLPLFSEINKDLFRTFSNTKTFFKIHKEEFDDIFFNLVNHPLREILENAFIGVDSIPSDFIVSMNLNSPSKFLVENKNKNTEGAGISTPRKKLTESPIKLLSRNNIGKALEVQVEELKRELTAKQSLLQENERQVSELKIRLETYQEKYASIQQRFSDLQKARQVEDNQNSSRTSDPGSPLVTGIDQKAILEEFRRRLQRQTDTISFLKDQIRRERGLNCSNDKVSHSKRKHATTDGDGTFKNFISAVPSNIWVKATIRIIVCFALLAGVLPYIRKYVYAHDTPSQNSRLQLSWWENSGILSKIVWFFEDQTDLETEYRSNANVDDAYSRVFGI</sequence>
<name>MPS2_YEAST</name>
<feature type="chain" id="PRO_0000202760" description="Monopolar spindle protein 2">
    <location>
        <begin position="1"/>
        <end position="387"/>
    </location>
</feature>
<feature type="transmembrane region" description="Helical" evidence="1">
    <location>
        <begin position="311"/>
        <end position="327"/>
    </location>
</feature>
<feature type="region of interest" description="Disordered" evidence="2">
    <location>
        <begin position="216"/>
        <end position="235"/>
    </location>
</feature>
<feature type="coiled-coil region" evidence="1">
    <location>
        <begin position="117"/>
        <end position="232"/>
    </location>
</feature>
<feature type="compositionally biased region" description="Polar residues" evidence="2">
    <location>
        <begin position="220"/>
        <end position="230"/>
    </location>
</feature>
<dbReference type="EMBL" id="Z72597">
    <property type="protein sequence ID" value="CAA96780.1"/>
    <property type="molecule type" value="Genomic_DNA"/>
</dbReference>
<dbReference type="EMBL" id="BK006941">
    <property type="protein sequence ID" value="DAA08030.1"/>
    <property type="molecule type" value="Genomic_DNA"/>
</dbReference>
<dbReference type="PIR" id="S64082">
    <property type="entry name" value="S64082"/>
</dbReference>
<dbReference type="RefSeq" id="NP_011440.1">
    <property type="nucleotide sequence ID" value="NM_001180940.1"/>
</dbReference>
<dbReference type="SMR" id="P53159"/>
<dbReference type="BioGRID" id="33175">
    <property type="interactions" value="102"/>
</dbReference>
<dbReference type="ComplexPortal" id="CPX-1287">
    <property type="entry name" value="MPS2-BBP1 spindle pole body anchor complex"/>
</dbReference>
<dbReference type="DIP" id="DIP-2989N"/>
<dbReference type="FunCoup" id="P53159">
    <property type="interactions" value="190"/>
</dbReference>
<dbReference type="IntAct" id="P53159">
    <property type="interactions" value="12"/>
</dbReference>
<dbReference type="MINT" id="P53159"/>
<dbReference type="STRING" id="4932.YGL075C"/>
<dbReference type="iPTMnet" id="P53159"/>
<dbReference type="PaxDb" id="4932-YGL075C"/>
<dbReference type="PeptideAtlas" id="P53159"/>
<dbReference type="EnsemblFungi" id="YGL075C_mRNA">
    <property type="protein sequence ID" value="YGL075C"/>
    <property type="gene ID" value="YGL075C"/>
</dbReference>
<dbReference type="GeneID" id="852805"/>
<dbReference type="KEGG" id="sce:YGL075C"/>
<dbReference type="AGR" id="SGD:S000003043"/>
<dbReference type="SGD" id="S000003043">
    <property type="gene designation" value="MPS2"/>
</dbReference>
<dbReference type="VEuPathDB" id="FungiDB:YGL075C"/>
<dbReference type="eggNOG" id="ENOG502RYE7">
    <property type="taxonomic scope" value="Eukaryota"/>
</dbReference>
<dbReference type="HOGENOM" id="CLU_069890_0_0_1"/>
<dbReference type="InParanoid" id="P53159"/>
<dbReference type="OMA" id="FIYAKDF"/>
<dbReference type="OrthoDB" id="4035046at2759"/>
<dbReference type="BioCyc" id="YEAST:G3O-30576-MONOMER"/>
<dbReference type="BioGRID-ORCS" id="852805">
    <property type="hits" value="1 hit in 10 CRISPR screens"/>
</dbReference>
<dbReference type="CD-CODE" id="876000F7">
    <property type="entry name" value="Centrosome"/>
</dbReference>
<dbReference type="PRO" id="PR:P53159"/>
<dbReference type="Proteomes" id="UP000002311">
    <property type="component" value="Chromosome VII"/>
</dbReference>
<dbReference type="RNAct" id="P53159">
    <property type="molecule type" value="protein"/>
</dbReference>
<dbReference type="GO" id="GO:0000781">
    <property type="term" value="C:chromosome, telomeric region"/>
    <property type="evidence" value="ECO:0000314"/>
    <property type="project" value="SGD"/>
</dbReference>
<dbReference type="GO" id="GO:0005783">
    <property type="term" value="C:endoplasmic reticulum"/>
    <property type="evidence" value="ECO:0007005"/>
    <property type="project" value="SGD"/>
</dbReference>
<dbReference type="GO" id="GO:0034993">
    <property type="term" value="C:meiotic nuclear membrane microtubule tethering complex"/>
    <property type="evidence" value="ECO:0000314"/>
    <property type="project" value="SGD"/>
</dbReference>
<dbReference type="GO" id="GO:0016020">
    <property type="term" value="C:membrane"/>
    <property type="evidence" value="ECO:0000314"/>
    <property type="project" value="ComplexPortal"/>
</dbReference>
<dbReference type="GO" id="GO:0106084">
    <property type="term" value="C:mitotic nuclear membrane microtubule tethering complex"/>
    <property type="evidence" value="ECO:0000353"/>
    <property type="project" value="ComplexPortal"/>
</dbReference>
<dbReference type="GO" id="GO:0005635">
    <property type="term" value="C:nuclear envelope"/>
    <property type="evidence" value="ECO:0000314"/>
    <property type="project" value="SGD"/>
</dbReference>
<dbReference type="GO" id="GO:0005640">
    <property type="term" value="C:nuclear outer membrane"/>
    <property type="evidence" value="ECO:0000314"/>
    <property type="project" value="SGD"/>
</dbReference>
<dbReference type="GO" id="GO:0005816">
    <property type="term" value="C:spindle pole body"/>
    <property type="evidence" value="ECO:0000314"/>
    <property type="project" value="SGD"/>
</dbReference>
<dbReference type="GO" id="GO:0140444">
    <property type="term" value="F:cytoskeleton-nuclear membrane anchor activity"/>
    <property type="evidence" value="ECO:0000314"/>
    <property type="project" value="SGD"/>
</dbReference>
<dbReference type="GO" id="GO:0000741">
    <property type="term" value="P:karyogamy"/>
    <property type="evidence" value="ECO:0000315"/>
    <property type="project" value="SGD"/>
</dbReference>
<dbReference type="GO" id="GO:0044821">
    <property type="term" value="P:meiotic telomere tethering at nuclear periphery"/>
    <property type="evidence" value="ECO:0000314"/>
    <property type="project" value="SGD"/>
</dbReference>
<dbReference type="GO" id="GO:1990608">
    <property type="term" value="P:mitotic spindle pole body localization"/>
    <property type="evidence" value="ECO:0000314"/>
    <property type="project" value="ComplexPortal"/>
</dbReference>
<dbReference type="GO" id="GO:0071988">
    <property type="term" value="P:protein localization to spindle pole body"/>
    <property type="evidence" value="ECO:0000315"/>
    <property type="project" value="SGD"/>
</dbReference>
<dbReference type="GO" id="GO:0030474">
    <property type="term" value="P:spindle pole body duplication"/>
    <property type="evidence" value="ECO:0000315"/>
    <property type="project" value="SGD"/>
</dbReference>
<dbReference type="InterPro" id="IPR031433">
    <property type="entry name" value="Mps2"/>
</dbReference>
<dbReference type="Pfam" id="PF17060">
    <property type="entry name" value="MPS2"/>
    <property type="match status" value="1"/>
</dbReference>
<protein>
    <recommendedName>
        <fullName>Monopolar spindle protein 2</fullName>
    </recommendedName>
</protein>
<reference key="1">
    <citation type="journal article" date="1997" name="Yeast">
        <title>Sequence analysis of 203 kilobases from Saccharomyces cerevisiae chromosome VII.</title>
        <authorList>
            <person name="Rieger M."/>
            <person name="Brueckner M."/>
            <person name="Schaefer M."/>
            <person name="Mueller-Auer S."/>
        </authorList>
    </citation>
    <scope>NUCLEOTIDE SEQUENCE [GENOMIC DNA]</scope>
    <source>
        <strain>ATCC 204508 / S288c</strain>
    </source>
</reference>
<reference key="2">
    <citation type="journal article" date="1997" name="Nature">
        <title>The nucleotide sequence of Saccharomyces cerevisiae chromosome VII.</title>
        <authorList>
            <person name="Tettelin H."/>
            <person name="Agostoni-Carbone M.L."/>
            <person name="Albermann K."/>
            <person name="Albers M."/>
            <person name="Arroyo J."/>
            <person name="Backes U."/>
            <person name="Barreiros T."/>
            <person name="Bertani I."/>
            <person name="Bjourson A.J."/>
            <person name="Brueckner M."/>
            <person name="Bruschi C.V."/>
            <person name="Carignani G."/>
            <person name="Castagnoli L."/>
            <person name="Cerdan E."/>
            <person name="Clemente M.L."/>
            <person name="Coblenz A."/>
            <person name="Coglievina M."/>
            <person name="Coissac E."/>
            <person name="Defoor E."/>
            <person name="Del Bino S."/>
            <person name="Delius H."/>
            <person name="Delneri D."/>
            <person name="de Wergifosse P."/>
            <person name="Dujon B."/>
            <person name="Durand P."/>
            <person name="Entian K.-D."/>
            <person name="Eraso P."/>
            <person name="Escribano V."/>
            <person name="Fabiani L."/>
            <person name="Fartmann B."/>
            <person name="Feroli F."/>
            <person name="Feuermann M."/>
            <person name="Frontali L."/>
            <person name="Garcia-Gonzalez M."/>
            <person name="Garcia-Saez M.I."/>
            <person name="Goffeau A."/>
            <person name="Guerreiro P."/>
            <person name="Hani J."/>
            <person name="Hansen M."/>
            <person name="Hebling U."/>
            <person name="Hernandez K."/>
            <person name="Heumann K."/>
            <person name="Hilger F."/>
            <person name="Hofmann B."/>
            <person name="Indge K.J."/>
            <person name="James C.M."/>
            <person name="Klima R."/>
            <person name="Koetter P."/>
            <person name="Kramer B."/>
            <person name="Kramer W."/>
            <person name="Lauquin G."/>
            <person name="Leuther H."/>
            <person name="Louis E.J."/>
            <person name="Maillier E."/>
            <person name="Marconi A."/>
            <person name="Martegani E."/>
            <person name="Mazon M.J."/>
            <person name="Mazzoni C."/>
            <person name="McReynolds A.D.K."/>
            <person name="Melchioretto P."/>
            <person name="Mewes H.-W."/>
            <person name="Minenkova O."/>
            <person name="Mueller-Auer S."/>
            <person name="Nawrocki A."/>
            <person name="Netter P."/>
            <person name="Neu R."/>
            <person name="Nombela C."/>
            <person name="Oliver S.G."/>
            <person name="Panzeri L."/>
            <person name="Paoluzi S."/>
            <person name="Plevani P."/>
            <person name="Portetelle D."/>
            <person name="Portillo F."/>
            <person name="Potier S."/>
            <person name="Purnelle B."/>
            <person name="Rieger M."/>
            <person name="Riles L."/>
            <person name="Rinaldi T."/>
            <person name="Robben J."/>
            <person name="Rodrigues-Pousada C."/>
            <person name="Rodriguez-Belmonte E."/>
            <person name="Rodriguez-Torres A.M."/>
            <person name="Rose M."/>
            <person name="Ruzzi M."/>
            <person name="Saliola M."/>
            <person name="Sanchez-Perez M."/>
            <person name="Schaefer B."/>
            <person name="Schaefer M."/>
            <person name="Scharfe M."/>
            <person name="Schmidheini T."/>
            <person name="Schreer A."/>
            <person name="Skala J."/>
            <person name="Souciet J.-L."/>
            <person name="Steensma H.Y."/>
            <person name="Talla E."/>
            <person name="Thierry A."/>
            <person name="Vandenbol M."/>
            <person name="van der Aart Q.J.M."/>
            <person name="Van Dyck L."/>
            <person name="Vanoni M."/>
            <person name="Verhasselt P."/>
            <person name="Voet M."/>
            <person name="Volckaert G."/>
            <person name="Wambutt R."/>
            <person name="Watson M.D."/>
            <person name="Weber N."/>
            <person name="Wedler E."/>
            <person name="Wedler H."/>
            <person name="Wipfli P."/>
            <person name="Wolf K."/>
            <person name="Wright L.F."/>
            <person name="Zaccaria P."/>
            <person name="Zimmermann M."/>
            <person name="Zollner A."/>
            <person name="Kleine K."/>
        </authorList>
    </citation>
    <scope>NUCLEOTIDE SEQUENCE [LARGE SCALE GENOMIC DNA]</scope>
    <source>
        <strain>ATCC 204508 / S288c</strain>
    </source>
</reference>
<reference key="3">
    <citation type="journal article" date="2014" name="G3 (Bethesda)">
        <title>The reference genome sequence of Saccharomyces cerevisiae: Then and now.</title>
        <authorList>
            <person name="Engel S.R."/>
            <person name="Dietrich F.S."/>
            <person name="Fisk D.G."/>
            <person name="Binkley G."/>
            <person name="Balakrishnan R."/>
            <person name="Costanzo M.C."/>
            <person name="Dwight S.S."/>
            <person name="Hitz B.C."/>
            <person name="Karra K."/>
            <person name="Nash R.S."/>
            <person name="Weng S."/>
            <person name="Wong E.D."/>
            <person name="Lloyd P."/>
            <person name="Skrzypek M.S."/>
            <person name="Miyasato S.R."/>
            <person name="Simison M."/>
            <person name="Cherry J.M."/>
        </authorList>
    </citation>
    <scope>GENOME REANNOTATION</scope>
    <source>
        <strain>ATCC 204508 / S288c</strain>
    </source>
</reference>
<reference key="4">
    <citation type="journal article" date="1991" name="J. Cell Biol.">
        <title>MPS1 and MPS2: novel yeast genes defining distinct steps of spindle pole body duplication.</title>
        <authorList>
            <person name="Winey M."/>
            <person name="Goetsch L."/>
            <person name="Baum P."/>
            <person name="Byers B."/>
        </authorList>
    </citation>
    <scope>FUNCTION</scope>
</reference>
<reference key="5">
    <citation type="journal article" date="1997" name="J. Cell Biol.">
        <title>The yeast CDC37 gene interacts with MPS1 and is required for proper execution of spindle pole body duplication.</title>
        <authorList>
            <person name="Schutz A.R."/>
            <person name="Giddings T.H. Jr."/>
            <person name="Steiner E."/>
            <person name="Winey M."/>
        </authorList>
    </citation>
    <scope>FUNCTION</scope>
</reference>
<reference key="6">
    <citation type="journal article" date="1999" name="Mol. Biol. Cell">
        <title>Saccharomyces cerevisiae MPS2 encodes a membrane protein localized at the spindle pole body and the nuclear envelope.</title>
        <authorList>
            <person name="Munoz-Centeno M.C."/>
            <person name="McBratney S."/>
            <person name="Monterrosa A."/>
            <person name="Byers B."/>
            <person name="Mann C."/>
            <person name="Winey M."/>
        </authorList>
    </citation>
    <scope>FUNCTION</scope>
    <scope>SUBCELLULAR LOCATION</scope>
</reference>
<reference key="7">
    <citation type="journal article" date="2000" name="EMBO J.">
        <title>The Bbp1p-Mps2p complex connects the SPB to the nuclear envelope and is essential for SPB duplication.</title>
        <authorList>
            <person name="Schramm C."/>
            <person name="Elliott S."/>
            <person name="Shevchenko A."/>
            <person name="Schiebel E."/>
        </authorList>
    </citation>
    <scope>IDENTIFICATION BY MASS SPECTROMETRY</scope>
    <scope>FUNCTION</scope>
    <scope>INTERACTION WITH BBP1</scope>
</reference>
<reference key="8">
    <citation type="journal article" date="2002" name="Genetics">
        <title>Mutant membrane protein of the budding yeast spindle pole body is targeted to the endoplasmic reticulum degradation pathway.</title>
        <authorList>
            <person name="McBratney S."/>
            <person name="Winey M."/>
        </authorList>
    </citation>
    <scope>FUNCTION</scope>
</reference>
<reference key="9">
    <citation type="journal article" date="2002" name="Mol. Microbiol.">
        <title>Spc24 interacts with Mps2 and is required for chromosome segregation, but is not implicated in spindle pole body duplication.</title>
        <authorList>
            <person name="Le Masson I."/>
            <person name="Saveanu C."/>
            <person name="Chevalier A."/>
            <person name="Namane A."/>
            <person name="Gobin R."/>
            <person name="Fromont-Racine M."/>
            <person name="Jacquier A."/>
            <person name="Mann C."/>
        </authorList>
    </citation>
    <scope>FUNCTION</scope>
    <scope>INTERACTION WITH SPC24</scope>
</reference>
<reference key="10">
    <citation type="journal article" date="2006" name="J. Cell Biol.">
        <title>The Sad1-UNC-84 homology domain in Mps3 interacts with Mps2 to connect the spindle pole body with the nuclear envelope.</title>
        <authorList>
            <person name="Jaspersen S.L."/>
            <person name="Martin A.E."/>
            <person name="Glazko G."/>
            <person name="Giddings T.H. Jr."/>
            <person name="Morgan G."/>
            <person name="Mushegian A."/>
            <person name="Winey M."/>
        </authorList>
    </citation>
    <scope>FUNCTION</scope>
    <scope>INTERACTION WITH MPS3</scope>
</reference>
<reference key="11">
    <citation type="journal article" date="2006" name="Mol. Biol. Cell">
        <title>The Saccharomyces cerevisiae spindle pole body (SPB) component Nbp1p is required for SPB membrane insertion and interacts with the integral membrane proteins Ndc1p and Mps2p.</title>
        <authorList>
            <person name="Araki Y."/>
            <person name="Lau C.K."/>
            <person name="Maekawa H."/>
            <person name="Jaspersen S.L."/>
            <person name="Giddings T.H. Jr."/>
            <person name="Schiebel E."/>
            <person name="Winey M."/>
        </authorList>
    </citation>
    <scope>FUNCTION</scope>
    <scope>INTERACTION WITH NBP1</scope>
</reference>
<comment type="function">
    <text evidence="3 4 5 6 7 8 9 10">Component of the spindle pole body (SPB) required for insertion of the nascent SPB into the nuclear envelope and for the proper execution of spindle pole body (SPB) duplication.</text>
</comment>
<comment type="subunit">
    <text evidence="4 5 7 8">Interacts with BBP1, MPS3, and SPC24.</text>
</comment>
<comment type="interaction">
    <interactant intactId="EBI-23834">
        <id>P53159</id>
    </interactant>
    <interactant intactId="EBI-3448">
        <id>Q12365</id>
        <label>BBP1</label>
    </interactant>
    <organismsDiffer>false</organismsDiffer>
    <experiments>7</experiments>
</comment>
<comment type="interaction">
    <interactant intactId="EBI-23834">
        <id>P53159</id>
    </interactant>
    <interactant intactId="EBI-25811">
        <id>P47069</id>
        <label>MPS3</label>
    </interactant>
    <organismsDiffer>false</organismsDiffer>
    <experiments>4</experiments>
</comment>
<comment type="interaction">
    <interactant intactId="EBI-23834">
        <id>P53159</id>
    </interactant>
    <interactant intactId="EBI-11886">
        <id>P52919</id>
        <label>NBP1</label>
    </interactant>
    <organismsDiffer>false</organismsDiffer>
    <experiments>2</experiments>
</comment>
<comment type="interaction">
    <interactant intactId="EBI-23834">
        <id>P53159</id>
    </interactant>
    <interactant intactId="EBI-27228">
        <id>Q04477</id>
        <label>SPC24</label>
    </interactant>
    <organismsDiffer>false</organismsDiffer>
    <experiments>8</experiments>
</comment>
<comment type="subcellular location">
    <subcellularLocation>
        <location evidence="3">Nucleus membrane</location>
        <topology evidence="3">Single-pass membrane protein</topology>
    </subcellularLocation>
    <subcellularLocation>
        <location evidence="3">Cytoplasm</location>
        <location evidence="3">Cytoskeleton</location>
        <location evidence="3">Microtubule organizing center</location>
        <location evidence="3">Spindle pole body</location>
    </subcellularLocation>
</comment>
<comment type="similarity">
    <text evidence="11">Belongs to the MPS2 family.</text>
</comment>
<gene>
    <name type="primary">MPS2</name>
    <name type="synonym">MMC1</name>
    <name type="ordered locus">YGL075C</name>
</gene>
<evidence type="ECO:0000255" key="1"/>
<evidence type="ECO:0000256" key="2">
    <source>
        <dbReference type="SAM" id="MobiDB-lite"/>
    </source>
</evidence>
<evidence type="ECO:0000269" key="3">
    <source>
    </source>
</evidence>
<evidence type="ECO:0000269" key="4">
    <source>
    </source>
</evidence>
<evidence type="ECO:0000269" key="5">
    <source>
    </source>
</evidence>
<evidence type="ECO:0000269" key="6">
    <source>
    </source>
</evidence>
<evidence type="ECO:0000269" key="7">
    <source>
    </source>
</evidence>
<evidence type="ECO:0000269" key="8">
    <source>
    </source>
</evidence>
<evidence type="ECO:0000269" key="9">
    <source>
    </source>
</evidence>
<evidence type="ECO:0000269" key="10">
    <source>
    </source>
</evidence>
<evidence type="ECO:0000305" key="11"/>
<proteinExistence type="evidence at protein level"/>